<reference key="1">
    <citation type="submission" date="2003-08" db="EMBL/GenBank/DDBJ databases">
        <title>CIRP; cold-inducible RNA-binding protein.</title>
        <authorList>
            <person name="Hong J.K."/>
            <person name="Park M.T."/>
            <person name="Lee G.M."/>
        </authorList>
    </citation>
    <scope>NUCLEOTIDE SEQUENCE [MRNA]</scope>
    <source>
        <tissue>Ovary</tissue>
    </source>
</reference>
<accession>P60826</accession>
<sequence length="172" mass="18607">MASDEGKLFVGGLSFDTNEQALEQVFSKYGQISEVVVVKDRETQRSRGFGFVTFENIDDAKDAMMAMNGKSVDGRQIRVDQAGKSSDNRSRGYRGGSAGGRGFFRGGRSRGRGFSRGGGDRGYGGGRFESRSGGYGGSRDYYASRSQGGSYGYRSSGGSYRDSYDSYATHNE</sequence>
<keyword id="KW-0963">Cytoplasm</keyword>
<keyword id="KW-0539">Nucleus</keyword>
<keyword id="KW-0597">Phosphoprotein</keyword>
<keyword id="KW-0694">RNA-binding</keyword>
<keyword id="KW-0346">Stress response</keyword>
<name>CIRBP_CRIGR</name>
<evidence type="ECO:0000250" key="1"/>
<evidence type="ECO:0000250" key="2">
    <source>
        <dbReference type="UniProtKB" id="Q14011"/>
    </source>
</evidence>
<evidence type="ECO:0000255" key="3">
    <source>
        <dbReference type="PROSITE-ProRule" id="PRU00176"/>
    </source>
</evidence>
<evidence type="ECO:0000256" key="4">
    <source>
        <dbReference type="SAM" id="MobiDB-lite"/>
    </source>
</evidence>
<dbReference type="EMBL" id="AY359860">
    <property type="protein sequence ID" value="AAQ57122.1"/>
    <property type="molecule type" value="mRNA"/>
</dbReference>
<dbReference type="RefSeq" id="NP_001231002.1">
    <property type="nucleotide sequence ID" value="NM_001244073.1"/>
</dbReference>
<dbReference type="RefSeq" id="XP_016831142.1">
    <property type="nucleotide sequence ID" value="XM_016975653.1"/>
</dbReference>
<dbReference type="SMR" id="P60826"/>
<dbReference type="PaxDb" id="10029-NP_001231002.1"/>
<dbReference type="Ensembl" id="ENSCGRT00001027836.1">
    <property type="protein sequence ID" value="ENSCGRP00001023590.1"/>
    <property type="gene ID" value="ENSCGRG00001021763.1"/>
</dbReference>
<dbReference type="GeneID" id="100689075"/>
<dbReference type="KEGG" id="cge:100689075"/>
<dbReference type="CTD" id="1153"/>
<dbReference type="eggNOG" id="KOG0118">
    <property type="taxonomic scope" value="Eukaryota"/>
</dbReference>
<dbReference type="GeneTree" id="ENSGT00940000156757"/>
<dbReference type="OrthoDB" id="439808at2759"/>
<dbReference type="Proteomes" id="UP000694386">
    <property type="component" value="Unplaced"/>
</dbReference>
<dbReference type="Proteomes" id="UP001108280">
    <property type="component" value="Chromosome 5"/>
</dbReference>
<dbReference type="GO" id="GO:0005737">
    <property type="term" value="C:cytoplasm"/>
    <property type="evidence" value="ECO:0000250"/>
    <property type="project" value="UniProtKB"/>
</dbReference>
<dbReference type="GO" id="GO:0010494">
    <property type="term" value="C:cytoplasmic stress granule"/>
    <property type="evidence" value="ECO:0000250"/>
    <property type="project" value="UniProtKB"/>
</dbReference>
<dbReference type="GO" id="GO:0005654">
    <property type="term" value="C:nucleoplasm"/>
    <property type="evidence" value="ECO:0007669"/>
    <property type="project" value="UniProtKB-SubCell"/>
</dbReference>
<dbReference type="GO" id="GO:0005634">
    <property type="term" value="C:nucleus"/>
    <property type="evidence" value="ECO:0000250"/>
    <property type="project" value="UniProtKB"/>
</dbReference>
<dbReference type="GO" id="GO:0003730">
    <property type="term" value="F:mRNA 3'-UTR binding"/>
    <property type="evidence" value="ECO:0000250"/>
    <property type="project" value="UniProtKB"/>
</dbReference>
<dbReference type="GO" id="GO:0070181">
    <property type="term" value="F:small ribosomal subunit rRNA binding"/>
    <property type="evidence" value="ECO:0000250"/>
    <property type="project" value="UniProtKB"/>
</dbReference>
<dbReference type="GO" id="GO:0030371">
    <property type="term" value="F:translation repressor activity"/>
    <property type="evidence" value="ECO:0000250"/>
    <property type="project" value="UniProtKB"/>
</dbReference>
<dbReference type="GO" id="GO:0048255">
    <property type="term" value="P:mRNA stabilization"/>
    <property type="evidence" value="ECO:0000250"/>
    <property type="project" value="UniProtKB"/>
</dbReference>
<dbReference type="GO" id="GO:0045727">
    <property type="term" value="P:positive regulation of translation"/>
    <property type="evidence" value="ECO:0000250"/>
    <property type="project" value="UniProtKB"/>
</dbReference>
<dbReference type="GO" id="GO:0009411">
    <property type="term" value="P:response to UV"/>
    <property type="evidence" value="ECO:0000250"/>
    <property type="project" value="UniProtKB"/>
</dbReference>
<dbReference type="GO" id="GO:0034063">
    <property type="term" value="P:stress granule assembly"/>
    <property type="evidence" value="ECO:0000250"/>
    <property type="project" value="UniProtKB"/>
</dbReference>
<dbReference type="CDD" id="cd12449">
    <property type="entry name" value="RRM_CIRBP_RBM3"/>
    <property type="match status" value="1"/>
</dbReference>
<dbReference type="FunFam" id="3.30.70.330:FF:000174">
    <property type="entry name" value="cold-inducible RNA-binding protein isoform X2"/>
    <property type="match status" value="1"/>
</dbReference>
<dbReference type="Gene3D" id="3.30.70.330">
    <property type="match status" value="1"/>
</dbReference>
<dbReference type="InterPro" id="IPR012677">
    <property type="entry name" value="Nucleotide-bd_a/b_plait_sf"/>
</dbReference>
<dbReference type="InterPro" id="IPR035979">
    <property type="entry name" value="RBD_domain_sf"/>
</dbReference>
<dbReference type="InterPro" id="IPR050441">
    <property type="entry name" value="RBM"/>
</dbReference>
<dbReference type="InterPro" id="IPR034278">
    <property type="entry name" value="RBM3/CIRBP_RRM"/>
</dbReference>
<dbReference type="InterPro" id="IPR000504">
    <property type="entry name" value="RRM_dom"/>
</dbReference>
<dbReference type="InterPro" id="IPR003954">
    <property type="entry name" value="RRM_dom_euk"/>
</dbReference>
<dbReference type="PANTHER" id="PTHR48034">
    <property type="entry name" value="TRANSFORMER-2 SEX-DETERMINING PROTEIN-RELATED"/>
    <property type="match status" value="1"/>
</dbReference>
<dbReference type="Pfam" id="PF00076">
    <property type="entry name" value="RRM_1"/>
    <property type="match status" value="1"/>
</dbReference>
<dbReference type="SMART" id="SM00360">
    <property type="entry name" value="RRM"/>
    <property type="match status" value="1"/>
</dbReference>
<dbReference type="SMART" id="SM00361">
    <property type="entry name" value="RRM_1"/>
    <property type="match status" value="1"/>
</dbReference>
<dbReference type="SUPFAM" id="SSF54928">
    <property type="entry name" value="RNA-binding domain, RBD"/>
    <property type="match status" value="1"/>
</dbReference>
<dbReference type="PROSITE" id="PS50102">
    <property type="entry name" value="RRM"/>
    <property type="match status" value="1"/>
</dbReference>
<proteinExistence type="evidence at transcript level"/>
<gene>
    <name type="primary">CIRBP</name>
    <name type="synonym">CIRP</name>
</gene>
<protein>
    <recommendedName>
        <fullName>Cold-inducible RNA-binding protein</fullName>
    </recommendedName>
    <alternativeName>
        <fullName>A18 hnRNP</fullName>
    </alternativeName>
    <alternativeName>
        <fullName>Glycine-rich RNA-binding protein CIRP</fullName>
    </alternativeName>
</protein>
<organism>
    <name type="scientific">Cricetulus griseus</name>
    <name type="common">Chinese hamster</name>
    <name type="synonym">Cricetulus barabensis griseus</name>
    <dbReference type="NCBI Taxonomy" id="10029"/>
    <lineage>
        <taxon>Eukaryota</taxon>
        <taxon>Metazoa</taxon>
        <taxon>Chordata</taxon>
        <taxon>Craniata</taxon>
        <taxon>Vertebrata</taxon>
        <taxon>Euteleostomi</taxon>
        <taxon>Mammalia</taxon>
        <taxon>Eutheria</taxon>
        <taxon>Euarchontoglires</taxon>
        <taxon>Glires</taxon>
        <taxon>Rodentia</taxon>
        <taxon>Myomorpha</taxon>
        <taxon>Muroidea</taxon>
        <taxon>Cricetidae</taxon>
        <taxon>Cricetinae</taxon>
        <taxon>Cricetulus</taxon>
    </lineage>
</organism>
<feature type="chain" id="PRO_0000081502" description="Cold-inducible RNA-binding protein">
    <location>
        <begin position="1"/>
        <end position="172"/>
    </location>
</feature>
<feature type="domain" description="RRM" evidence="3">
    <location>
        <begin position="6"/>
        <end position="84"/>
    </location>
</feature>
<feature type="region of interest" description="Disordered" evidence="4">
    <location>
        <begin position="70"/>
        <end position="172"/>
    </location>
</feature>
<feature type="compositionally biased region" description="Gly residues" evidence="4">
    <location>
        <begin position="93"/>
        <end position="105"/>
    </location>
</feature>
<feature type="compositionally biased region" description="Gly residues" evidence="4">
    <location>
        <begin position="114"/>
        <end position="137"/>
    </location>
</feature>
<feature type="compositionally biased region" description="Low complexity" evidence="4">
    <location>
        <begin position="138"/>
        <end position="172"/>
    </location>
</feature>
<feature type="modified residue" description="Phosphoserine" evidence="2">
    <location>
        <position position="130"/>
    </location>
</feature>
<feature type="modified residue" description="Phosphoserine" evidence="2">
    <location>
        <position position="138"/>
    </location>
</feature>
<feature type="modified residue" description="Phosphoserine" evidence="2">
    <location>
        <position position="146"/>
    </location>
</feature>
<feature type="modified residue" description="Phosphoserine" evidence="2">
    <location>
        <position position="156"/>
    </location>
</feature>
<feature type="modified residue" description="Phosphoserine" evidence="2">
    <location>
        <position position="159"/>
    </location>
</feature>
<feature type="modified residue" description="Phosphoserine" evidence="2">
    <location>
        <position position="163"/>
    </location>
</feature>
<comment type="function">
    <text evidence="1">Cold-inducible mRNA binding protein that plays a protective role in the genotoxic stress response by stabilizing transcripts of genes involved in cell survival. Acts as a translational activator. Seems to play an essential role in cold-induced suppression of cell proliferation. Binds specifically to the 3'-untranslated regions (3'-UTRs) of stress-responsive transcripts RPA2 and TXN. Acts as a translational repressor. Promotes assembly of stress granules (SGs), when overexpressed (By similarity).</text>
</comment>
<comment type="subunit">
    <text evidence="1">Interacts with EIF4G1. Associates with ribosomes (By similarity).</text>
</comment>
<comment type="subcellular location">
    <subcellularLocation>
        <location>Nucleus</location>
        <location>Nucleoplasm</location>
    </subcellularLocation>
    <subcellularLocation>
        <location>Cytoplasm</location>
    </subcellularLocation>
    <text evidence="1">Translocates from the nucleus to the cytoplasm after exposure to UV radiation. Translocates from the nucleus to the cytoplasm into stress granules upon various cytoplasmic stresses, such as osmotic and heat shocks. Its recruitment into stress granules occurs in the absence of TIAR proteins (By similarity).</text>
</comment>
<comment type="induction">
    <text>By cold stress.</text>
</comment>
<comment type="domain">
    <text evidence="1">Both the RRM domain and the arginine, glycine (RGG) rich domain are necessary for binding to the TXN 3'-untranslated region. Both the RRM domain and the arginine, glycine (RGG) rich domain (RGG repeats) are necessary for optimal recruitment into SGs upon cellular stress. The C-terminal domain containing RGG repeats is necessary for translational repression (By similarity).</text>
</comment>
<comment type="PTM">
    <text evidence="1">Methylated on arginine residues. Methylation of the RGG motifs is a prerequisite for recruitment into SGs (By similarity).</text>
</comment>
<comment type="PTM">
    <text evidence="1">Phosphorylated by CK2, GSK3A and GSK3B. Phosphorylation by GSK3B increases RNA-binding activity to the TXN 3'-UTR transcript upon exposure to UV radiation (By similarity).</text>
</comment>